<sequence>MADDDVQALVVDNGSGMCKAGFAGDDAPRAVFPSIVGRPKHPGIMVGMDQKDAYVGDEAQSKRGVLTLKYPIEHGIVTNWDDMEKIWHHTFYNELRVAPEEHPVLLTEAPLNPKANRERMTQIMFETFNVPAMYVNIQAVLSLYASGRTTGCVLDSGDGVSHTVPIYEGYALPHAIVRLDLAGRDLTDYMMKILTERGYSFTTTAEREIVRDIKEKLTYIALDFDQEMKTAAESSGLEKSYELPDGNVLVIGNERFRTPEVLFQPALIGKEASGIHDCTFQTIMKCDVDIRKDLYCNIVLSGGTTMYPGISERMTKELTALAPSTMKIKVVAPPERKYSVWIGGSILSSLSTFQQMWISKAEYDESGPSIVHRKCF</sequence>
<protein>
    <recommendedName>
        <fullName>Actin</fullName>
        <ecNumber evidence="1">3.6.4.-</ecNumber>
    </recommendedName>
</protein>
<dbReference type="EC" id="3.6.4.-" evidence="1"/>
<dbReference type="EMBL" id="X59936">
    <property type="protein sequence ID" value="CAA42559.1"/>
    <property type="molecule type" value="Genomic_DNA"/>
</dbReference>
<dbReference type="PIR" id="S24408">
    <property type="entry name" value="S24408"/>
</dbReference>
<dbReference type="SMR" id="P26182"/>
<dbReference type="GO" id="GO:0005737">
    <property type="term" value="C:cytoplasm"/>
    <property type="evidence" value="ECO:0007669"/>
    <property type="project" value="UniProtKB-KW"/>
</dbReference>
<dbReference type="GO" id="GO:0005856">
    <property type="term" value="C:cytoskeleton"/>
    <property type="evidence" value="ECO:0007669"/>
    <property type="project" value="UniProtKB-SubCell"/>
</dbReference>
<dbReference type="GO" id="GO:0005524">
    <property type="term" value="F:ATP binding"/>
    <property type="evidence" value="ECO:0007669"/>
    <property type="project" value="UniProtKB-KW"/>
</dbReference>
<dbReference type="GO" id="GO:0016787">
    <property type="term" value="F:hydrolase activity"/>
    <property type="evidence" value="ECO:0007669"/>
    <property type="project" value="UniProtKB-KW"/>
</dbReference>
<dbReference type="CDD" id="cd10224">
    <property type="entry name" value="ASKHA_NBD_actin"/>
    <property type="match status" value="1"/>
</dbReference>
<dbReference type="FunFam" id="2.30.36.70:FF:000001">
    <property type="entry name" value="Actin, alpha skeletal muscle"/>
    <property type="match status" value="1"/>
</dbReference>
<dbReference type="FunFam" id="3.30.420.40:FF:000291">
    <property type="entry name" value="Actin, alpha skeletal muscle"/>
    <property type="match status" value="1"/>
</dbReference>
<dbReference type="FunFam" id="3.90.640.10:FF:000001">
    <property type="entry name" value="Actin, muscle"/>
    <property type="match status" value="1"/>
</dbReference>
<dbReference type="FunFam" id="3.30.420.40:FF:000404">
    <property type="entry name" value="Major actin"/>
    <property type="match status" value="1"/>
</dbReference>
<dbReference type="FunFam" id="3.30.420.40:FF:000058">
    <property type="entry name" value="Putative actin-related protein 5"/>
    <property type="match status" value="1"/>
</dbReference>
<dbReference type="Gene3D" id="3.30.420.40">
    <property type="match status" value="2"/>
</dbReference>
<dbReference type="Gene3D" id="3.90.640.10">
    <property type="entry name" value="Actin, Chain A, domain 4"/>
    <property type="match status" value="1"/>
</dbReference>
<dbReference type="InterPro" id="IPR004000">
    <property type="entry name" value="Actin"/>
</dbReference>
<dbReference type="InterPro" id="IPR020902">
    <property type="entry name" value="Actin/actin-like_CS"/>
</dbReference>
<dbReference type="InterPro" id="IPR004001">
    <property type="entry name" value="Actin_CS"/>
</dbReference>
<dbReference type="InterPro" id="IPR043129">
    <property type="entry name" value="ATPase_NBD"/>
</dbReference>
<dbReference type="PANTHER" id="PTHR11937">
    <property type="entry name" value="ACTIN"/>
    <property type="match status" value="1"/>
</dbReference>
<dbReference type="Pfam" id="PF00022">
    <property type="entry name" value="Actin"/>
    <property type="match status" value="1"/>
</dbReference>
<dbReference type="PRINTS" id="PR00190">
    <property type="entry name" value="ACTIN"/>
</dbReference>
<dbReference type="SMART" id="SM00268">
    <property type="entry name" value="ACTIN"/>
    <property type="match status" value="1"/>
</dbReference>
<dbReference type="SUPFAM" id="SSF53067">
    <property type="entry name" value="Actin-like ATPase domain"/>
    <property type="match status" value="2"/>
</dbReference>
<dbReference type="PROSITE" id="PS00406">
    <property type="entry name" value="ACTINS_1"/>
    <property type="match status" value="1"/>
</dbReference>
<dbReference type="PROSITE" id="PS00432">
    <property type="entry name" value="ACTINS_2"/>
    <property type="match status" value="1"/>
</dbReference>
<dbReference type="PROSITE" id="PS01132">
    <property type="entry name" value="ACTINS_ACT_LIKE"/>
    <property type="match status" value="1"/>
</dbReference>
<name>ACT_ACHBI</name>
<comment type="function">
    <text>Actins are highly conserved proteins that are involved in various types of cell motility and are ubiquitously expressed in all eukaryotic cells.</text>
</comment>
<comment type="catalytic activity">
    <reaction evidence="1">
        <text>ATP + H2O = ADP + phosphate + H(+)</text>
        <dbReference type="Rhea" id="RHEA:13065"/>
        <dbReference type="ChEBI" id="CHEBI:15377"/>
        <dbReference type="ChEBI" id="CHEBI:15378"/>
        <dbReference type="ChEBI" id="CHEBI:30616"/>
        <dbReference type="ChEBI" id="CHEBI:43474"/>
        <dbReference type="ChEBI" id="CHEBI:456216"/>
    </reaction>
</comment>
<comment type="subcellular location">
    <subcellularLocation>
        <location>Cytoplasm</location>
        <location>Cytoskeleton</location>
    </subcellularLocation>
</comment>
<comment type="similarity">
    <text evidence="2">Belongs to the actin family.</text>
</comment>
<organism>
    <name type="scientific">Achlya bisexualis</name>
    <name type="common">Water mold</name>
    <dbReference type="NCBI Taxonomy" id="4766"/>
    <lineage>
        <taxon>Eukaryota</taxon>
        <taxon>Sar</taxon>
        <taxon>Stramenopiles</taxon>
        <taxon>Oomycota</taxon>
        <taxon>Saprolegniales</taxon>
        <taxon>Saprolegniaceae</taxon>
        <taxon>Achlya</taxon>
    </lineage>
</organism>
<proteinExistence type="inferred from homology"/>
<feature type="chain" id="PRO_0000088886" description="Actin">
    <location>
        <begin position="1"/>
        <end position="376"/>
    </location>
</feature>
<keyword id="KW-0067">ATP-binding</keyword>
<keyword id="KW-0963">Cytoplasm</keyword>
<keyword id="KW-0206">Cytoskeleton</keyword>
<keyword id="KW-0378">Hydrolase</keyword>
<keyword id="KW-0547">Nucleotide-binding</keyword>
<accession>P26182</accession>
<evidence type="ECO:0000250" key="1">
    <source>
        <dbReference type="UniProtKB" id="P68137"/>
    </source>
</evidence>
<evidence type="ECO:0000305" key="2"/>
<reference key="1">
    <citation type="journal article" date="1991" name="J. Mol. Evol.">
        <title>Molecular phylogenetic analysis of actin genic regions from Achlya bisexualis (Oomycota) and Costaria costata (Chromophyta).</title>
        <authorList>
            <person name="Bhattacharya D."/>
            <person name="Stickel S.K."/>
            <person name="Sogin M.L."/>
        </authorList>
    </citation>
    <scope>NUCLEOTIDE SEQUENCE [GENOMIC DNA]</scope>
    <source>
        <strain>T5</strain>
    </source>
</reference>